<reference key="1">
    <citation type="journal article" date="1986" name="FEBS Lett.">
        <title>A tobacco chloroplast DNA sequence possibly coding for a polypeptide similar to E. coli RNA polymerase beta-subunit.</title>
        <authorList>
            <person name="Ohme M."/>
            <person name="Tanaka M."/>
            <person name="Chunwongse J."/>
            <person name="Shinozaki K."/>
            <person name="Sugiura M."/>
        </authorList>
    </citation>
    <scope>NUCLEOTIDE SEQUENCE [GENOMIC DNA]</scope>
    <source>
        <strain>cv. Bright Yellow 4</strain>
    </source>
</reference>
<reference key="2">
    <citation type="journal article" date="1986" name="EMBO J.">
        <title>The complete nucleotide sequence of the tobacco chloroplast genome: its gene organization and expression.</title>
        <authorList>
            <person name="Shinozaki K."/>
            <person name="Ohme M."/>
            <person name="Tanaka M."/>
            <person name="Wakasugi T."/>
            <person name="Hayashida N."/>
            <person name="Matsubayashi T."/>
            <person name="Zaita N."/>
            <person name="Chunwongse J."/>
            <person name="Obokata J."/>
            <person name="Yamaguchi-Shinozaki K."/>
            <person name="Ohto C."/>
            <person name="Torazawa K."/>
            <person name="Meng B.-Y."/>
            <person name="Sugita M."/>
            <person name="Deno H."/>
            <person name="Kamogashira T."/>
            <person name="Yamada K."/>
            <person name="Kusuda J."/>
            <person name="Takaiwa F."/>
            <person name="Kato A."/>
            <person name="Tohdoh N."/>
            <person name="Shimada H."/>
            <person name="Sugiura M."/>
        </authorList>
    </citation>
    <scope>NUCLEOTIDE SEQUENCE [LARGE SCALE GENOMIC DNA]</scope>
    <source>
        <strain>cv. Bright Yellow 4</strain>
    </source>
</reference>
<geneLocation type="chloroplast"/>
<feature type="chain" id="PRO_0000048051" description="DNA-directed RNA polymerase subunit beta">
    <location>
        <begin position="1"/>
        <end position="1070"/>
    </location>
</feature>
<evidence type="ECO:0000255" key="1">
    <source>
        <dbReference type="HAMAP-Rule" id="MF_01321"/>
    </source>
</evidence>
<keyword id="KW-0002">3D-structure</keyword>
<keyword id="KW-0150">Chloroplast</keyword>
<keyword id="KW-0240">DNA-directed RNA polymerase</keyword>
<keyword id="KW-0548">Nucleotidyltransferase</keyword>
<keyword id="KW-0934">Plastid</keyword>
<keyword id="KW-1185">Reference proteome</keyword>
<keyword id="KW-0804">Transcription</keyword>
<keyword id="KW-0808">Transferase</keyword>
<proteinExistence type="evidence at protein level"/>
<protein>
    <recommendedName>
        <fullName evidence="1">DNA-directed RNA polymerase subunit beta</fullName>
        <ecNumber evidence="1">2.7.7.6</ecNumber>
    </recommendedName>
    <alternativeName>
        <fullName evidence="1">PEP</fullName>
    </alternativeName>
    <alternativeName>
        <fullName evidence="1">Plastid-encoded RNA polymerase subunit beta</fullName>
        <shortName evidence="1">RNA polymerase subunit beta</shortName>
    </alternativeName>
</protein>
<comment type="function">
    <text evidence="1">DNA-dependent RNA polymerase catalyzes the transcription of DNA into RNA using the four ribonucleoside triphosphates as substrates.</text>
</comment>
<comment type="catalytic activity">
    <reaction evidence="1">
        <text>RNA(n) + a ribonucleoside 5'-triphosphate = RNA(n+1) + diphosphate</text>
        <dbReference type="Rhea" id="RHEA:21248"/>
        <dbReference type="Rhea" id="RHEA-COMP:14527"/>
        <dbReference type="Rhea" id="RHEA-COMP:17342"/>
        <dbReference type="ChEBI" id="CHEBI:33019"/>
        <dbReference type="ChEBI" id="CHEBI:61557"/>
        <dbReference type="ChEBI" id="CHEBI:140395"/>
        <dbReference type="EC" id="2.7.7.6"/>
    </reaction>
</comment>
<comment type="subunit">
    <text evidence="1">In plastids the minimal PEP RNA polymerase catalytic core is composed of four subunits: alpha, beta, beta', and beta''. When a (nuclear-encoded) sigma factor is associated with the core the holoenzyme is formed, which can initiate transcription.</text>
</comment>
<comment type="subcellular location">
    <subcellularLocation>
        <location>Plastid</location>
        <location>Chloroplast</location>
    </subcellularLocation>
</comment>
<comment type="similarity">
    <text evidence="1">Belongs to the RNA polymerase beta chain family.</text>
</comment>
<dbReference type="EC" id="2.7.7.6" evidence="1"/>
<dbReference type="EMBL" id="X12745">
    <property type="protein sequence ID" value="CAA31238.1"/>
    <property type="molecule type" value="Genomic_DNA"/>
</dbReference>
<dbReference type="EMBL" id="Z00044">
    <property type="protein sequence ID" value="CAA77346.1"/>
    <property type="molecule type" value="Genomic_DNA"/>
</dbReference>
<dbReference type="PIR" id="A24865">
    <property type="entry name" value="RNNTB"/>
</dbReference>
<dbReference type="RefSeq" id="NP_054488.1">
    <property type="nucleotide sequence ID" value="NC_001879.2"/>
</dbReference>
<dbReference type="PDB" id="8W9Z">
    <property type="method" value="EM"/>
    <property type="resolution" value="3.00 A"/>
    <property type="chains" value="B=1-1070"/>
</dbReference>
<dbReference type="PDB" id="8WA0">
    <property type="method" value="EM"/>
    <property type="resolution" value="2.70 A"/>
    <property type="chains" value="B=1-1070"/>
</dbReference>
<dbReference type="PDB" id="8WA1">
    <property type="method" value="EM"/>
    <property type="resolution" value="2.80 A"/>
    <property type="chains" value="B=1-1070"/>
</dbReference>
<dbReference type="PDBsum" id="8W9Z"/>
<dbReference type="PDBsum" id="8WA0"/>
<dbReference type="PDBsum" id="8WA1"/>
<dbReference type="EMDB" id="EMD-37386"/>
<dbReference type="EMDB" id="EMD-37387"/>
<dbReference type="EMDB" id="EMD-37388"/>
<dbReference type="SMR" id="P06271"/>
<dbReference type="GeneID" id="800449"/>
<dbReference type="KEGG" id="nta:800449"/>
<dbReference type="OMA" id="FMTWEGY"/>
<dbReference type="OrthoDB" id="1678757at2759"/>
<dbReference type="Proteomes" id="UP000084051">
    <property type="component" value="Unplaced"/>
</dbReference>
<dbReference type="GO" id="GO:0009507">
    <property type="term" value="C:chloroplast"/>
    <property type="evidence" value="ECO:0007669"/>
    <property type="project" value="UniProtKB-SubCell"/>
</dbReference>
<dbReference type="GO" id="GO:0000428">
    <property type="term" value="C:DNA-directed RNA polymerase complex"/>
    <property type="evidence" value="ECO:0007669"/>
    <property type="project" value="UniProtKB-KW"/>
</dbReference>
<dbReference type="GO" id="GO:0005739">
    <property type="term" value="C:mitochondrion"/>
    <property type="evidence" value="ECO:0007669"/>
    <property type="project" value="GOC"/>
</dbReference>
<dbReference type="GO" id="GO:0003677">
    <property type="term" value="F:DNA binding"/>
    <property type="evidence" value="ECO:0007669"/>
    <property type="project" value="UniProtKB-UniRule"/>
</dbReference>
<dbReference type="GO" id="GO:0003899">
    <property type="term" value="F:DNA-directed RNA polymerase activity"/>
    <property type="evidence" value="ECO:0007669"/>
    <property type="project" value="UniProtKB-UniRule"/>
</dbReference>
<dbReference type="GO" id="GO:0032549">
    <property type="term" value="F:ribonucleoside binding"/>
    <property type="evidence" value="ECO:0007669"/>
    <property type="project" value="InterPro"/>
</dbReference>
<dbReference type="GO" id="GO:0006351">
    <property type="term" value="P:DNA-templated transcription"/>
    <property type="evidence" value="ECO:0007669"/>
    <property type="project" value="UniProtKB-UniRule"/>
</dbReference>
<dbReference type="CDD" id="cd00653">
    <property type="entry name" value="RNA_pol_B_RPB2"/>
    <property type="match status" value="1"/>
</dbReference>
<dbReference type="FunFam" id="3.90.1110.10:FF:000009">
    <property type="entry name" value="DNA-directed RNA polymerase subunit beta"/>
    <property type="match status" value="1"/>
</dbReference>
<dbReference type="Gene3D" id="2.40.50.100">
    <property type="match status" value="1"/>
</dbReference>
<dbReference type="Gene3D" id="2.40.50.150">
    <property type="match status" value="1"/>
</dbReference>
<dbReference type="Gene3D" id="3.90.1100.10">
    <property type="match status" value="1"/>
</dbReference>
<dbReference type="Gene3D" id="2.30.150.10">
    <property type="entry name" value="DNA-directed RNA polymerase, beta subunit, external 1 domain"/>
    <property type="match status" value="1"/>
</dbReference>
<dbReference type="Gene3D" id="2.40.270.10">
    <property type="entry name" value="DNA-directed RNA polymerase, subunit 2, domain 6"/>
    <property type="match status" value="2"/>
</dbReference>
<dbReference type="Gene3D" id="3.90.1800.10">
    <property type="entry name" value="RNA polymerase alpha subunit dimerisation domain"/>
    <property type="match status" value="1"/>
</dbReference>
<dbReference type="Gene3D" id="3.90.1110.10">
    <property type="entry name" value="RNA polymerase Rpb2, domain 2"/>
    <property type="match status" value="1"/>
</dbReference>
<dbReference type="HAMAP" id="MF_01321">
    <property type="entry name" value="RNApol_bact_RpoB"/>
    <property type="match status" value="1"/>
</dbReference>
<dbReference type="InterPro" id="IPR042107">
    <property type="entry name" value="DNA-dir_RNA_pol_bsu_ext_1_sf"/>
</dbReference>
<dbReference type="InterPro" id="IPR015712">
    <property type="entry name" value="DNA-dir_RNA_pol_su2"/>
</dbReference>
<dbReference type="InterPro" id="IPR007120">
    <property type="entry name" value="DNA-dir_RNAP_su2_dom"/>
</dbReference>
<dbReference type="InterPro" id="IPR037033">
    <property type="entry name" value="DNA-dir_RNAP_su2_hyb_sf"/>
</dbReference>
<dbReference type="InterPro" id="IPR010243">
    <property type="entry name" value="RNA_pol_bsu_bac"/>
</dbReference>
<dbReference type="InterPro" id="IPR007121">
    <property type="entry name" value="RNA_pol_bsu_CS"/>
</dbReference>
<dbReference type="InterPro" id="IPR007642">
    <property type="entry name" value="RNA_pol_Rpb2_2"/>
</dbReference>
<dbReference type="InterPro" id="IPR037034">
    <property type="entry name" value="RNA_pol_Rpb2_2_sf"/>
</dbReference>
<dbReference type="InterPro" id="IPR007645">
    <property type="entry name" value="RNA_pol_Rpb2_3"/>
</dbReference>
<dbReference type="InterPro" id="IPR007641">
    <property type="entry name" value="RNA_pol_Rpb2_7"/>
</dbReference>
<dbReference type="InterPro" id="IPR014724">
    <property type="entry name" value="RNA_pol_RPB2_OB-fold"/>
</dbReference>
<dbReference type="NCBIfam" id="NF001616">
    <property type="entry name" value="PRK00405.1"/>
    <property type="match status" value="1"/>
</dbReference>
<dbReference type="PANTHER" id="PTHR20856">
    <property type="entry name" value="DNA-DIRECTED RNA POLYMERASE I SUBUNIT 2"/>
    <property type="match status" value="1"/>
</dbReference>
<dbReference type="Pfam" id="PF04561">
    <property type="entry name" value="RNA_pol_Rpb2_2"/>
    <property type="match status" value="1"/>
</dbReference>
<dbReference type="Pfam" id="PF04565">
    <property type="entry name" value="RNA_pol_Rpb2_3"/>
    <property type="match status" value="1"/>
</dbReference>
<dbReference type="Pfam" id="PF00562">
    <property type="entry name" value="RNA_pol_Rpb2_6"/>
    <property type="match status" value="1"/>
</dbReference>
<dbReference type="Pfam" id="PF04560">
    <property type="entry name" value="RNA_pol_Rpb2_7"/>
    <property type="match status" value="1"/>
</dbReference>
<dbReference type="SUPFAM" id="SSF64484">
    <property type="entry name" value="beta and beta-prime subunits of DNA dependent RNA-polymerase"/>
    <property type="match status" value="1"/>
</dbReference>
<dbReference type="PROSITE" id="PS01166">
    <property type="entry name" value="RNA_POL_BETA"/>
    <property type="match status" value="1"/>
</dbReference>
<accession>P06271</accession>
<name>RPOB_TOBAC</name>
<gene>
    <name evidence="1" type="primary">rpoB</name>
</gene>
<organism>
    <name type="scientific">Nicotiana tabacum</name>
    <name type="common">Common tobacco</name>
    <dbReference type="NCBI Taxonomy" id="4097"/>
    <lineage>
        <taxon>Eukaryota</taxon>
        <taxon>Viridiplantae</taxon>
        <taxon>Streptophyta</taxon>
        <taxon>Embryophyta</taxon>
        <taxon>Tracheophyta</taxon>
        <taxon>Spermatophyta</taxon>
        <taxon>Magnoliopsida</taxon>
        <taxon>eudicotyledons</taxon>
        <taxon>Gunneridae</taxon>
        <taxon>Pentapetalae</taxon>
        <taxon>asterids</taxon>
        <taxon>lamiids</taxon>
        <taxon>Solanales</taxon>
        <taxon>Solanaceae</taxon>
        <taxon>Nicotianoideae</taxon>
        <taxon>Nicotianeae</taxon>
        <taxon>Nicotiana</taxon>
    </lineage>
</organism>
<sequence length="1070" mass="120547">MLGDGNEGISTIPGFNQIQFEGFCRFIDQGLTEELYKFPKIEDTDQEIEFQLFVETYQLVEPLIKERDAVYESLTYSSELYVSAGLIWKNSRDMQEQTIFIGNIPLMNSLGTSIVNGIYRIVINQILQSPGIYYRSELDHNGISVYTGTIISDWGGRSELEIDRKARIWARVSRKQKISILVLSSAMGLNLREILENVCYPEIFLSFLSDKERKKIGSKENAILEFYQQFACVGGDPVFSESLCKELQKKFFQQRCELGRIGRRNMNRRLNLDIPQNNTFLLPRDILAAADHLIGLKFGMGALDDMNHLKNKRIRSVADLLQDQFGLALVRLENVVRGTICGAIRHKLIPTPQNLVTSTPLTTTYESFFGLHPLSQVLDRTNPLTQIVHGRKLSYLGPGGLTGRTASFRIRDIHPSHYGRICPIDTSEGINVGLIGSLAIHARIGHWGSLESPFYEISERSTGVRMLYLSPGRDEYYMVAAGNSLALNQDIQEEQVVPARYRQEFLTIAWEQVHLRSIFPFQYFSIGASLIPFIEHNDANRALMSSNMQRQAVPLSRSEKCIVGTGLERQAALDSGALAIAEREGRVVYTNTDKILLAGNGDILSIPLVIYQRSNKNTCMHQKLQVPRGKCIKKGQILADGAATVGGELALGKNVLVAYMPWEGYNSEDAVLISERLVYEDIYTSFHIRKYEIQTHVTSQGPEKVTNEIPHLEAHLLRNLDKNGIVMLGSWVETGDILVGKLTPQVVKESSYAPEDRLLRAILGIQVSTSKETCLKLPIGGRGRVIDVRWIQKRGGSSYNPETIRVYILQKREIKVGDKVAGRHGNKGIISKILPRQDMPYLQDGRSVDMVFNPLGVPSRMNVGQIFECSLGLAGSLLDRHYRIAPFDERYEQEASRKLVFSELYEASKQTANPWVFEPEYPGKSRIFDGRTGNPFEQPVIIGKPYILKLIHQVDDKIHGRSSGHYALVTQQPLRGRAKQGGQRVGEMEVWALEGFGVAHILQEMLTYKSDHIRARQEVLGTTIIGGTIPNPEDAPESFRLLVRELRSLALELNHFLVSEKNFQINRKEA</sequence>